<evidence type="ECO:0000250" key="1">
    <source>
        <dbReference type="UniProtKB" id="A9JX06"/>
    </source>
</evidence>
<evidence type="ECO:0000305" key="2"/>
<name>PSMA2_STAAS</name>
<organism>
    <name type="scientific">Staphylococcus aureus (strain MSSA476)</name>
    <dbReference type="NCBI Taxonomy" id="282459"/>
    <lineage>
        <taxon>Bacteria</taxon>
        <taxon>Bacillati</taxon>
        <taxon>Bacillota</taxon>
        <taxon>Bacilli</taxon>
        <taxon>Bacillales</taxon>
        <taxon>Staphylococcaceae</taxon>
        <taxon>Staphylococcus</taxon>
    </lineage>
</organism>
<reference key="1">
    <citation type="journal article" date="2004" name="Proc. Natl. Acad. Sci. U.S.A.">
        <title>Complete genomes of two clinical Staphylococcus aureus strains: evidence for the rapid evolution of virulence and drug resistance.</title>
        <authorList>
            <person name="Holden M.T.G."/>
            <person name="Feil E.J."/>
            <person name="Lindsay J.A."/>
            <person name="Peacock S.J."/>
            <person name="Day N.P.J."/>
            <person name="Enright M.C."/>
            <person name="Foster T.J."/>
            <person name="Moore C.E."/>
            <person name="Hurst L."/>
            <person name="Atkin R."/>
            <person name="Barron A."/>
            <person name="Bason N."/>
            <person name="Bentley S.D."/>
            <person name="Chillingworth C."/>
            <person name="Chillingworth T."/>
            <person name="Churcher C."/>
            <person name="Clark L."/>
            <person name="Corton C."/>
            <person name="Cronin A."/>
            <person name="Doggett J."/>
            <person name="Dowd L."/>
            <person name="Feltwell T."/>
            <person name="Hance Z."/>
            <person name="Harris B."/>
            <person name="Hauser H."/>
            <person name="Holroyd S."/>
            <person name="Jagels K."/>
            <person name="James K.D."/>
            <person name="Lennard N."/>
            <person name="Line A."/>
            <person name="Mayes R."/>
            <person name="Moule S."/>
            <person name="Mungall K."/>
            <person name="Ormond D."/>
            <person name="Quail M.A."/>
            <person name="Rabbinowitsch E."/>
            <person name="Rutherford K.M."/>
            <person name="Sanders M."/>
            <person name="Sharp S."/>
            <person name="Simmonds M."/>
            <person name="Stevens K."/>
            <person name="Whitehead S."/>
            <person name="Barrell B.G."/>
            <person name="Spratt B.G."/>
            <person name="Parkhill J."/>
        </authorList>
    </citation>
    <scope>NUCLEOTIDE SEQUENCE [LARGE SCALE GENOMIC DNA]</scope>
    <source>
        <strain>MSSA476</strain>
    </source>
</reference>
<protein>
    <recommendedName>
        <fullName>Phenol-soluble modulin alpha 2 peptide</fullName>
    </recommendedName>
</protein>
<keyword id="KW-0204">Cytolysis</keyword>
<keyword id="KW-0843">Virulence</keyword>
<comment type="function">
    <text evidence="1">Peptide which can recruit, activate and subsequently lyse human neutrophils, thus eliminating the main cellular defense against infection.</text>
</comment>
<comment type="similarity">
    <text evidence="2">Belongs to the phenol-soluble modulin alpha peptides family.</text>
</comment>
<dbReference type="EMBL" id="BX571857">
    <property type="status" value="NOT_ANNOTATED_CDS"/>
    <property type="molecule type" value="Genomic_DNA"/>
</dbReference>
<dbReference type="GO" id="GO:0031640">
    <property type="term" value="P:killing of cells of another organism"/>
    <property type="evidence" value="ECO:0007669"/>
    <property type="project" value="UniProtKB-KW"/>
</dbReference>
<dbReference type="InterPro" id="IPR031429">
    <property type="entry name" value="PSM_alpha"/>
</dbReference>
<dbReference type="NCBIfam" id="NF033425">
    <property type="entry name" value="PSM_alpha_1_2"/>
    <property type="match status" value="1"/>
</dbReference>
<dbReference type="Pfam" id="PF17063">
    <property type="entry name" value="PSMalpha"/>
    <property type="match status" value="1"/>
</dbReference>
<sequence>MGIIAGIIKFIKGLIEKFTGK</sequence>
<feature type="peptide" id="PRO_0000345054" description="Phenol-soluble modulin alpha 2 peptide">
    <location>
        <begin position="1"/>
        <end position="21"/>
    </location>
</feature>
<proteinExistence type="inferred from homology"/>
<gene>
    <name type="primary">psmA2</name>
    <name type="ordered locus">SAS0409.3</name>
</gene>
<accession>P0C801</accession>